<organism>
    <name type="scientific">Salmonella newport (strain SL254)</name>
    <dbReference type="NCBI Taxonomy" id="423368"/>
    <lineage>
        <taxon>Bacteria</taxon>
        <taxon>Pseudomonadati</taxon>
        <taxon>Pseudomonadota</taxon>
        <taxon>Gammaproteobacteria</taxon>
        <taxon>Enterobacterales</taxon>
        <taxon>Enterobacteriaceae</taxon>
        <taxon>Salmonella</taxon>
    </lineage>
</organism>
<sequence>MKALTARQQEVFDLIRDHISQTGMPPTRAEIAQRLGFRSPNAAEEHLKALARKGVLEIVSGASRGIRLLQEEEDGLPLVGRVAAGEPLLAQQHIEGHYQVDPSLFKPSADFLLRVSGMSMKDIGIMDGDLLAVHKTQDVRNGQVVVARIDDEVTVKRLKKQGNKVELLPENSEFTPIVVDLREQSFTIEGLAVGVIRNGEWL</sequence>
<feature type="chain" id="PRO_1000089595" description="LexA repressor">
    <location>
        <begin position="1"/>
        <end position="202"/>
    </location>
</feature>
<feature type="DNA-binding region" description="H-T-H motif" evidence="1">
    <location>
        <begin position="28"/>
        <end position="48"/>
    </location>
</feature>
<feature type="active site" description="For autocatalytic cleavage activity" evidence="1">
    <location>
        <position position="119"/>
    </location>
</feature>
<feature type="active site" description="For autocatalytic cleavage activity" evidence="1">
    <location>
        <position position="156"/>
    </location>
</feature>
<feature type="site" description="Cleavage; by autolysis" evidence="1">
    <location>
        <begin position="84"/>
        <end position="85"/>
    </location>
</feature>
<gene>
    <name evidence="1" type="primary">lexA</name>
    <name type="ordered locus">SNSL254_A4580</name>
</gene>
<reference key="1">
    <citation type="journal article" date="2011" name="J. Bacteriol.">
        <title>Comparative genomics of 28 Salmonella enterica isolates: evidence for CRISPR-mediated adaptive sublineage evolution.</title>
        <authorList>
            <person name="Fricke W.F."/>
            <person name="Mammel M.K."/>
            <person name="McDermott P.F."/>
            <person name="Tartera C."/>
            <person name="White D.G."/>
            <person name="Leclerc J.E."/>
            <person name="Ravel J."/>
            <person name="Cebula T.A."/>
        </authorList>
    </citation>
    <scope>NUCLEOTIDE SEQUENCE [LARGE SCALE GENOMIC DNA]</scope>
    <source>
        <strain>SL254</strain>
    </source>
</reference>
<comment type="function">
    <text evidence="1">Represses a number of genes involved in the response to DNA damage (SOS response), including recA and lexA. Binds to the 16 bp palindromic sequence 5'-CTGTATATATATACAG-3'. In the presence of single-stranded DNA, RecA interacts with LexA causing an autocatalytic cleavage which disrupts the DNA-binding part of LexA, leading to derepression of the SOS regulon and eventually DNA repair.</text>
</comment>
<comment type="catalytic activity">
    <reaction evidence="1">
        <text>Hydrolysis of Ala-|-Gly bond in repressor LexA.</text>
        <dbReference type="EC" id="3.4.21.88"/>
    </reaction>
</comment>
<comment type="subunit">
    <text evidence="1">Homodimer.</text>
</comment>
<comment type="similarity">
    <text evidence="1">Belongs to the peptidase S24 family.</text>
</comment>
<proteinExistence type="inferred from homology"/>
<evidence type="ECO:0000255" key="1">
    <source>
        <dbReference type="HAMAP-Rule" id="MF_00015"/>
    </source>
</evidence>
<dbReference type="EC" id="3.4.21.88" evidence="1"/>
<dbReference type="EMBL" id="CP001113">
    <property type="protein sequence ID" value="ACF65576.1"/>
    <property type="molecule type" value="Genomic_DNA"/>
</dbReference>
<dbReference type="RefSeq" id="WP_000646079.1">
    <property type="nucleotide sequence ID" value="NZ_CCMR01000003.1"/>
</dbReference>
<dbReference type="SMR" id="B4T1T2"/>
<dbReference type="MEROPS" id="S24.001"/>
<dbReference type="KEGG" id="see:SNSL254_A4580"/>
<dbReference type="HOGENOM" id="CLU_066192_45_3_6"/>
<dbReference type="Proteomes" id="UP000008824">
    <property type="component" value="Chromosome"/>
</dbReference>
<dbReference type="GO" id="GO:0003677">
    <property type="term" value="F:DNA binding"/>
    <property type="evidence" value="ECO:0007669"/>
    <property type="project" value="UniProtKB-UniRule"/>
</dbReference>
<dbReference type="GO" id="GO:0004252">
    <property type="term" value="F:serine-type endopeptidase activity"/>
    <property type="evidence" value="ECO:0007669"/>
    <property type="project" value="UniProtKB-UniRule"/>
</dbReference>
<dbReference type="GO" id="GO:0006281">
    <property type="term" value="P:DNA repair"/>
    <property type="evidence" value="ECO:0007669"/>
    <property type="project" value="UniProtKB-UniRule"/>
</dbReference>
<dbReference type="GO" id="GO:0006260">
    <property type="term" value="P:DNA replication"/>
    <property type="evidence" value="ECO:0007669"/>
    <property type="project" value="UniProtKB-UniRule"/>
</dbReference>
<dbReference type="GO" id="GO:0045892">
    <property type="term" value="P:negative regulation of DNA-templated transcription"/>
    <property type="evidence" value="ECO:0007669"/>
    <property type="project" value="UniProtKB-UniRule"/>
</dbReference>
<dbReference type="GO" id="GO:0006508">
    <property type="term" value="P:proteolysis"/>
    <property type="evidence" value="ECO:0007669"/>
    <property type="project" value="InterPro"/>
</dbReference>
<dbReference type="GO" id="GO:0009432">
    <property type="term" value="P:SOS response"/>
    <property type="evidence" value="ECO:0007669"/>
    <property type="project" value="UniProtKB-UniRule"/>
</dbReference>
<dbReference type="CDD" id="cd06529">
    <property type="entry name" value="S24_LexA-like"/>
    <property type="match status" value="1"/>
</dbReference>
<dbReference type="FunFam" id="1.10.10.10:FF:000009">
    <property type="entry name" value="LexA repressor"/>
    <property type="match status" value="1"/>
</dbReference>
<dbReference type="FunFam" id="2.10.109.10:FF:000001">
    <property type="entry name" value="LexA repressor"/>
    <property type="match status" value="1"/>
</dbReference>
<dbReference type="Gene3D" id="2.10.109.10">
    <property type="entry name" value="Umud Fragment, subunit A"/>
    <property type="match status" value="1"/>
</dbReference>
<dbReference type="Gene3D" id="1.10.10.10">
    <property type="entry name" value="Winged helix-like DNA-binding domain superfamily/Winged helix DNA-binding domain"/>
    <property type="match status" value="1"/>
</dbReference>
<dbReference type="HAMAP" id="MF_00015">
    <property type="entry name" value="LexA"/>
    <property type="match status" value="1"/>
</dbReference>
<dbReference type="InterPro" id="IPR006200">
    <property type="entry name" value="LexA"/>
</dbReference>
<dbReference type="InterPro" id="IPR039418">
    <property type="entry name" value="LexA-like"/>
</dbReference>
<dbReference type="InterPro" id="IPR036286">
    <property type="entry name" value="LexA/Signal_pep-like_sf"/>
</dbReference>
<dbReference type="InterPro" id="IPR006199">
    <property type="entry name" value="LexA_DNA-bd_dom"/>
</dbReference>
<dbReference type="InterPro" id="IPR050077">
    <property type="entry name" value="LexA_repressor"/>
</dbReference>
<dbReference type="InterPro" id="IPR006197">
    <property type="entry name" value="Peptidase_S24_LexA"/>
</dbReference>
<dbReference type="InterPro" id="IPR015927">
    <property type="entry name" value="Peptidase_S24_S26A/B/C"/>
</dbReference>
<dbReference type="InterPro" id="IPR036388">
    <property type="entry name" value="WH-like_DNA-bd_sf"/>
</dbReference>
<dbReference type="InterPro" id="IPR036390">
    <property type="entry name" value="WH_DNA-bd_sf"/>
</dbReference>
<dbReference type="NCBIfam" id="TIGR00498">
    <property type="entry name" value="lexA"/>
    <property type="match status" value="1"/>
</dbReference>
<dbReference type="PANTHER" id="PTHR33516">
    <property type="entry name" value="LEXA REPRESSOR"/>
    <property type="match status" value="1"/>
</dbReference>
<dbReference type="PANTHER" id="PTHR33516:SF2">
    <property type="entry name" value="LEXA REPRESSOR-RELATED"/>
    <property type="match status" value="1"/>
</dbReference>
<dbReference type="Pfam" id="PF01726">
    <property type="entry name" value="LexA_DNA_bind"/>
    <property type="match status" value="1"/>
</dbReference>
<dbReference type="Pfam" id="PF00717">
    <property type="entry name" value="Peptidase_S24"/>
    <property type="match status" value="1"/>
</dbReference>
<dbReference type="PRINTS" id="PR00726">
    <property type="entry name" value="LEXASERPTASE"/>
</dbReference>
<dbReference type="SUPFAM" id="SSF51306">
    <property type="entry name" value="LexA/Signal peptidase"/>
    <property type="match status" value="1"/>
</dbReference>
<dbReference type="SUPFAM" id="SSF46785">
    <property type="entry name" value="Winged helix' DNA-binding domain"/>
    <property type="match status" value="1"/>
</dbReference>
<keyword id="KW-0068">Autocatalytic cleavage</keyword>
<keyword id="KW-0227">DNA damage</keyword>
<keyword id="KW-0234">DNA repair</keyword>
<keyword id="KW-0235">DNA replication</keyword>
<keyword id="KW-0238">DNA-binding</keyword>
<keyword id="KW-0378">Hydrolase</keyword>
<keyword id="KW-0678">Repressor</keyword>
<keyword id="KW-0742">SOS response</keyword>
<keyword id="KW-0804">Transcription</keyword>
<keyword id="KW-0805">Transcription regulation</keyword>
<name>LEXA_SALNS</name>
<protein>
    <recommendedName>
        <fullName evidence="1">LexA repressor</fullName>
        <ecNumber evidence="1">3.4.21.88</ecNumber>
    </recommendedName>
</protein>
<accession>B4T1T2</accession>